<protein>
    <recommendedName>
        <fullName evidence="1">Protein nucleotidyltransferase YdiU</fullName>
        <ecNumber evidence="1">2.7.7.-</ecNumber>
    </recommendedName>
    <alternativeName>
        <fullName evidence="1">Protein adenylyltransferase YdiU</fullName>
        <ecNumber evidence="1">2.7.7.108</ecNumber>
    </alternativeName>
    <alternativeName>
        <fullName evidence="1">Protein uridylyltransferase YdiU</fullName>
        <ecNumber evidence="1">2.7.7.-</ecNumber>
    </alternativeName>
</protein>
<name>SELO_XYLFA</name>
<gene>
    <name evidence="1" type="primary">ydiU</name>
    <name evidence="1" type="synonym">selO</name>
    <name type="ordered locus">XF_2619</name>
</gene>
<reference key="1">
    <citation type="journal article" date="2000" name="Nature">
        <title>The genome sequence of the plant pathogen Xylella fastidiosa.</title>
        <authorList>
            <person name="Simpson A.J.G."/>
            <person name="Reinach F.C."/>
            <person name="Arruda P."/>
            <person name="Abreu F.A."/>
            <person name="Acencio M."/>
            <person name="Alvarenga R."/>
            <person name="Alves L.M.C."/>
            <person name="Araya J.E."/>
            <person name="Baia G.S."/>
            <person name="Baptista C.S."/>
            <person name="Barros M.H."/>
            <person name="Bonaccorsi E.D."/>
            <person name="Bordin S."/>
            <person name="Bove J.M."/>
            <person name="Briones M.R.S."/>
            <person name="Bueno M.R.P."/>
            <person name="Camargo A.A."/>
            <person name="Camargo L.E.A."/>
            <person name="Carraro D.M."/>
            <person name="Carrer H."/>
            <person name="Colauto N.B."/>
            <person name="Colombo C."/>
            <person name="Costa F.F."/>
            <person name="Costa M.C.R."/>
            <person name="Costa-Neto C.M."/>
            <person name="Coutinho L.L."/>
            <person name="Cristofani M."/>
            <person name="Dias-Neto E."/>
            <person name="Docena C."/>
            <person name="El-Dorry H."/>
            <person name="Facincani A.P."/>
            <person name="Ferreira A.J.S."/>
            <person name="Ferreira V.C.A."/>
            <person name="Ferro J.A."/>
            <person name="Fraga J.S."/>
            <person name="Franca S.C."/>
            <person name="Franco M.C."/>
            <person name="Frohme M."/>
            <person name="Furlan L.R."/>
            <person name="Garnier M."/>
            <person name="Goldman G.H."/>
            <person name="Goldman M.H.S."/>
            <person name="Gomes S.L."/>
            <person name="Gruber A."/>
            <person name="Ho P.L."/>
            <person name="Hoheisel J.D."/>
            <person name="Junqueira M.L."/>
            <person name="Kemper E.L."/>
            <person name="Kitajima J.P."/>
            <person name="Krieger J.E."/>
            <person name="Kuramae E.E."/>
            <person name="Laigret F."/>
            <person name="Lambais M.R."/>
            <person name="Leite L.C.C."/>
            <person name="Lemos E.G.M."/>
            <person name="Lemos M.V.F."/>
            <person name="Lopes S.A."/>
            <person name="Lopes C.R."/>
            <person name="Machado J.A."/>
            <person name="Machado M.A."/>
            <person name="Madeira A.M.B.N."/>
            <person name="Madeira H.M.F."/>
            <person name="Marino C.L."/>
            <person name="Marques M.V."/>
            <person name="Martins E.A.L."/>
            <person name="Martins E.M.F."/>
            <person name="Matsukuma A.Y."/>
            <person name="Menck C.F.M."/>
            <person name="Miracca E.C."/>
            <person name="Miyaki C.Y."/>
            <person name="Monteiro-Vitorello C.B."/>
            <person name="Moon D.H."/>
            <person name="Nagai M.A."/>
            <person name="Nascimento A.L.T.O."/>
            <person name="Netto L.E.S."/>
            <person name="Nhani A. Jr."/>
            <person name="Nobrega F.G."/>
            <person name="Nunes L.R."/>
            <person name="Oliveira M.A."/>
            <person name="de Oliveira M.C."/>
            <person name="de Oliveira R.C."/>
            <person name="Palmieri D.A."/>
            <person name="Paris A."/>
            <person name="Peixoto B.R."/>
            <person name="Pereira G.A.G."/>
            <person name="Pereira H.A. Jr."/>
            <person name="Pesquero J.B."/>
            <person name="Quaggio R.B."/>
            <person name="Roberto P.G."/>
            <person name="Rodrigues V."/>
            <person name="de Rosa A.J.M."/>
            <person name="de Rosa V.E. Jr."/>
            <person name="de Sa R.G."/>
            <person name="Santelli R.V."/>
            <person name="Sawasaki H.E."/>
            <person name="da Silva A.C.R."/>
            <person name="da Silva A.M."/>
            <person name="da Silva F.R."/>
            <person name="Silva W.A. Jr."/>
            <person name="da Silveira J.F."/>
            <person name="Silvestri M.L.Z."/>
            <person name="Siqueira W.J."/>
            <person name="de Souza A.A."/>
            <person name="de Souza A.P."/>
            <person name="Terenzi M.F."/>
            <person name="Truffi D."/>
            <person name="Tsai S.M."/>
            <person name="Tsuhako M.H."/>
            <person name="Vallada H."/>
            <person name="Van Sluys M.A."/>
            <person name="Verjovski-Almeida S."/>
            <person name="Vettore A.L."/>
            <person name="Zago M.A."/>
            <person name="Zatz M."/>
            <person name="Meidanis J."/>
            <person name="Setubal J.C."/>
        </authorList>
    </citation>
    <scope>NUCLEOTIDE SEQUENCE [LARGE SCALE GENOMIC DNA]</scope>
    <source>
        <strain>9a5c</strain>
    </source>
</reference>
<proteinExistence type="inferred from homology"/>
<comment type="function">
    <text evidence="1">Nucleotidyltransferase involved in the post-translational modification of proteins. It can catalyze the addition of adenosine monophosphate (AMP) or uridine monophosphate (UMP) to a protein, resulting in modifications known as AMPylation and UMPylation.</text>
</comment>
<comment type="catalytic activity">
    <reaction evidence="1">
        <text>L-seryl-[protein] + ATP = 3-O-(5'-adenylyl)-L-seryl-[protein] + diphosphate</text>
        <dbReference type="Rhea" id="RHEA:58120"/>
        <dbReference type="Rhea" id="RHEA-COMP:9863"/>
        <dbReference type="Rhea" id="RHEA-COMP:15073"/>
        <dbReference type="ChEBI" id="CHEBI:29999"/>
        <dbReference type="ChEBI" id="CHEBI:30616"/>
        <dbReference type="ChEBI" id="CHEBI:33019"/>
        <dbReference type="ChEBI" id="CHEBI:142516"/>
        <dbReference type="EC" id="2.7.7.108"/>
    </reaction>
</comment>
<comment type="catalytic activity">
    <reaction evidence="1">
        <text>L-threonyl-[protein] + ATP = 3-O-(5'-adenylyl)-L-threonyl-[protein] + diphosphate</text>
        <dbReference type="Rhea" id="RHEA:54292"/>
        <dbReference type="Rhea" id="RHEA-COMP:11060"/>
        <dbReference type="Rhea" id="RHEA-COMP:13847"/>
        <dbReference type="ChEBI" id="CHEBI:30013"/>
        <dbReference type="ChEBI" id="CHEBI:30616"/>
        <dbReference type="ChEBI" id="CHEBI:33019"/>
        <dbReference type="ChEBI" id="CHEBI:138113"/>
        <dbReference type="EC" id="2.7.7.108"/>
    </reaction>
</comment>
<comment type="catalytic activity">
    <reaction evidence="1">
        <text>L-tyrosyl-[protein] + ATP = O-(5'-adenylyl)-L-tyrosyl-[protein] + diphosphate</text>
        <dbReference type="Rhea" id="RHEA:54288"/>
        <dbReference type="Rhea" id="RHEA-COMP:10136"/>
        <dbReference type="Rhea" id="RHEA-COMP:13846"/>
        <dbReference type="ChEBI" id="CHEBI:30616"/>
        <dbReference type="ChEBI" id="CHEBI:33019"/>
        <dbReference type="ChEBI" id="CHEBI:46858"/>
        <dbReference type="ChEBI" id="CHEBI:83624"/>
        <dbReference type="EC" id="2.7.7.108"/>
    </reaction>
</comment>
<comment type="catalytic activity">
    <reaction evidence="1">
        <text>L-histidyl-[protein] + UTP = N(tele)-(5'-uridylyl)-L-histidyl-[protein] + diphosphate</text>
        <dbReference type="Rhea" id="RHEA:83891"/>
        <dbReference type="Rhea" id="RHEA-COMP:9745"/>
        <dbReference type="Rhea" id="RHEA-COMP:20239"/>
        <dbReference type="ChEBI" id="CHEBI:29979"/>
        <dbReference type="ChEBI" id="CHEBI:33019"/>
        <dbReference type="ChEBI" id="CHEBI:46398"/>
        <dbReference type="ChEBI" id="CHEBI:233474"/>
    </reaction>
</comment>
<comment type="catalytic activity">
    <reaction evidence="1">
        <text>L-seryl-[protein] + UTP = O-(5'-uridylyl)-L-seryl-[protein] + diphosphate</text>
        <dbReference type="Rhea" id="RHEA:64604"/>
        <dbReference type="Rhea" id="RHEA-COMP:9863"/>
        <dbReference type="Rhea" id="RHEA-COMP:16635"/>
        <dbReference type="ChEBI" id="CHEBI:29999"/>
        <dbReference type="ChEBI" id="CHEBI:33019"/>
        <dbReference type="ChEBI" id="CHEBI:46398"/>
        <dbReference type="ChEBI" id="CHEBI:156051"/>
    </reaction>
</comment>
<comment type="catalytic activity">
    <reaction evidence="1">
        <text>L-tyrosyl-[protein] + UTP = O-(5'-uridylyl)-L-tyrosyl-[protein] + diphosphate</text>
        <dbReference type="Rhea" id="RHEA:83887"/>
        <dbReference type="Rhea" id="RHEA-COMP:10136"/>
        <dbReference type="Rhea" id="RHEA-COMP:20238"/>
        <dbReference type="ChEBI" id="CHEBI:33019"/>
        <dbReference type="ChEBI" id="CHEBI:46398"/>
        <dbReference type="ChEBI" id="CHEBI:46858"/>
        <dbReference type="ChEBI" id="CHEBI:90602"/>
    </reaction>
</comment>
<comment type="cofactor">
    <cofactor evidence="1">
        <name>Mg(2+)</name>
        <dbReference type="ChEBI" id="CHEBI:18420"/>
    </cofactor>
    <cofactor evidence="1">
        <name>Mn(2+)</name>
        <dbReference type="ChEBI" id="CHEBI:29035"/>
    </cofactor>
</comment>
<comment type="similarity">
    <text evidence="1">Belongs to the SELO family.</text>
</comment>
<evidence type="ECO:0000255" key="1">
    <source>
        <dbReference type="HAMAP-Rule" id="MF_00692"/>
    </source>
</evidence>
<feature type="chain" id="PRO_0000121440" description="Protein nucleotidyltransferase YdiU">
    <location>
        <begin position="1"/>
        <end position="519"/>
    </location>
</feature>
<feature type="active site" description="Proton acceptor" evidence="1">
    <location>
        <position position="270"/>
    </location>
</feature>
<feature type="binding site" evidence="1">
    <location>
        <position position="100"/>
    </location>
    <ligand>
        <name>ATP</name>
        <dbReference type="ChEBI" id="CHEBI:30616"/>
    </ligand>
</feature>
<feature type="binding site" evidence="1">
    <location>
        <position position="102"/>
    </location>
    <ligand>
        <name>ATP</name>
        <dbReference type="ChEBI" id="CHEBI:30616"/>
    </ligand>
</feature>
<feature type="binding site" evidence="1">
    <location>
        <position position="103"/>
    </location>
    <ligand>
        <name>ATP</name>
        <dbReference type="ChEBI" id="CHEBI:30616"/>
    </ligand>
</feature>
<feature type="binding site" evidence="1">
    <location>
        <position position="123"/>
    </location>
    <ligand>
        <name>ATP</name>
        <dbReference type="ChEBI" id="CHEBI:30616"/>
    </ligand>
</feature>
<feature type="binding site" evidence="1">
    <location>
        <position position="135"/>
    </location>
    <ligand>
        <name>ATP</name>
        <dbReference type="ChEBI" id="CHEBI:30616"/>
    </ligand>
</feature>
<feature type="binding site" evidence="1">
    <location>
        <position position="136"/>
    </location>
    <ligand>
        <name>ATP</name>
        <dbReference type="ChEBI" id="CHEBI:30616"/>
    </ligand>
</feature>
<feature type="binding site" evidence="1">
    <location>
        <position position="193"/>
    </location>
    <ligand>
        <name>ATP</name>
        <dbReference type="ChEBI" id="CHEBI:30616"/>
    </ligand>
</feature>
<feature type="binding site" evidence="1">
    <location>
        <position position="200"/>
    </location>
    <ligand>
        <name>ATP</name>
        <dbReference type="ChEBI" id="CHEBI:30616"/>
    </ligand>
</feature>
<feature type="binding site" evidence="1">
    <location>
        <position position="271"/>
    </location>
    <ligand>
        <name>Mg(2+)</name>
        <dbReference type="ChEBI" id="CHEBI:18420"/>
    </ligand>
</feature>
<feature type="binding site" evidence="1">
    <location>
        <position position="280"/>
    </location>
    <ligand>
        <name>ATP</name>
        <dbReference type="ChEBI" id="CHEBI:30616"/>
    </ligand>
</feature>
<feature type="binding site" evidence="1">
    <location>
        <position position="280"/>
    </location>
    <ligand>
        <name>Mg(2+)</name>
        <dbReference type="ChEBI" id="CHEBI:18420"/>
    </ligand>
</feature>
<organism>
    <name type="scientific">Xylella fastidiosa (strain 9a5c)</name>
    <dbReference type="NCBI Taxonomy" id="160492"/>
    <lineage>
        <taxon>Bacteria</taxon>
        <taxon>Pseudomonadati</taxon>
        <taxon>Pseudomonadota</taxon>
        <taxon>Gammaproteobacteria</taxon>
        <taxon>Lysobacterales</taxon>
        <taxon>Lysobacteraceae</taxon>
        <taxon>Xylella</taxon>
    </lineage>
</organism>
<sequence length="519" mass="58323">MWPLRFNNRFIAVLPCDPEVSLRSRQVLEAWSGVAPTPVPVPCLLAYSSEVAAILNFDAEELVTPRFVEVFSGNALYPGMQPYAVNYGGHQFGQWVGQLGDGRVITLGELLGADGVYYELQLKGAGPTPYSRGADGRAVLRSSIREFLCSEAMHHLGIPTTRALSLIATGDTVIRDMLYDGHPAPEPSAIVCRVAPSFVRFGTFELPASRGDIDLLRRLVEFTIMRDYPHLHGAGETLYVDWFAEICTRTAELVAHWMRVGFVHGVMNTDNMSILGLTIDYGPYGWIDNNDLDWTPNVTDAQSRRYRFGAQPQVAYWNLGCLARALAPLFSDAASLQAGLERFRATYLAAERRDAAAKLGFAACFDEDLELFDALRTCMHQAEMDMTLTFLGLADWEPNMPDSLSLWAEAFYDPVKRDAQAPMLRDWLQRYAARLSVDPLPVAERHERMRLANPRYVLRNYLTQQAIECAEQGDLIELHALLEVMRRPYDFQLGREAYAMRRPEWARSRIGCSMLSCSS</sequence>
<keyword id="KW-0067">ATP-binding</keyword>
<keyword id="KW-0460">Magnesium</keyword>
<keyword id="KW-0464">Manganese</keyword>
<keyword id="KW-0479">Metal-binding</keyword>
<keyword id="KW-0547">Nucleotide-binding</keyword>
<keyword id="KW-0548">Nucleotidyltransferase</keyword>
<keyword id="KW-0808">Transferase</keyword>
<dbReference type="EC" id="2.7.7.-" evidence="1"/>
<dbReference type="EC" id="2.7.7.108" evidence="1"/>
<dbReference type="EMBL" id="AE003849">
    <property type="protein sequence ID" value="AAF85416.1"/>
    <property type="molecule type" value="Genomic_DNA"/>
</dbReference>
<dbReference type="PIR" id="D82536">
    <property type="entry name" value="D82536"/>
</dbReference>
<dbReference type="RefSeq" id="WP_010895036.1">
    <property type="nucleotide sequence ID" value="NC_002488.3"/>
</dbReference>
<dbReference type="SMR" id="Q9PA99"/>
<dbReference type="STRING" id="160492.XF_2619"/>
<dbReference type="KEGG" id="xfa:XF_2619"/>
<dbReference type="PATRIC" id="fig|160492.11.peg.2782"/>
<dbReference type="eggNOG" id="COG0397">
    <property type="taxonomic scope" value="Bacteria"/>
</dbReference>
<dbReference type="HOGENOM" id="CLU_010245_4_0_6"/>
<dbReference type="Proteomes" id="UP000000812">
    <property type="component" value="Chromosome"/>
</dbReference>
<dbReference type="GO" id="GO:0070733">
    <property type="term" value="F:AMPylase activity"/>
    <property type="evidence" value="ECO:0007669"/>
    <property type="project" value="TreeGrafter"/>
</dbReference>
<dbReference type="GO" id="GO:0005524">
    <property type="term" value="F:ATP binding"/>
    <property type="evidence" value="ECO:0007669"/>
    <property type="project" value="UniProtKB-UniRule"/>
</dbReference>
<dbReference type="GO" id="GO:0000287">
    <property type="term" value="F:magnesium ion binding"/>
    <property type="evidence" value="ECO:0007669"/>
    <property type="project" value="UniProtKB-UniRule"/>
</dbReference>
<dbReference type="HAMAP" id="MF_00692">
    <property type="entry name" value="YdiU_SelO"/>
    <property type="match status" value="1"/>
</dbReference>
<dbReference type="InterPro" id="IPR003846">
    <property type="entry name" value="SelO"/>
</dbReference>
<dbReference type="NCBIfam" id="NF000658">
    <property type="entry name" value="PRK00029.1"/>
    <property type="match status" value="1"/>
</dbReference>
<dbReference type="PANTHER" id="PTHR32057">
    <property type="entry name" value="PROTEIN ADENYLYLTRANSFERASE SELO, MITOCHONDRIAL"/>
    <property type="match status" value="1"/>
</dbReference>
<dbReference type="PANTHER" id="PTHR32057:SF14">
    <property type="entry name" value="PROTEIN ADENYLYLTRANSFERASE SELO, MITOCHONDRIAL"/>
    <property type="match status" value="1"/>
</dbReference>
<dbReference type="Pfam" id="PF02696">
    <property type="entry name" value="SelO"/>
    <property type="match status" value="1"/>
</dbReference>
<accession>Q9PA99</accession>